<sequence length="402" mass="42458">MANAYGFVGHSVPTMKRAAQFQQMGSGFCSADSISKRVFCCSVVQGADKPASGDSRTEYRTPRLVSRGCKLVGSGSAMPALQVSNDDLSKIVDTNDEWISVRTGIRNRRVLTGKESLTNLATVAARKALEMAQVDANDVDMVLMCTSTPEDLFGSAPQIQKALGCKKNPLAYDITAACSGFVLGLVSAACHIRGGGFNNILVIGADSLSRYVDWTDRGTCILFGDAAGAVLVQSCDAEEDGLFAFDLHSDGDGQRHLKAAITENGIDHAVGSNGSVSDFPPRSSSYSCIQMNGKEVFRFACRCVPQSIESALGKAGLNGSNIDWLLLHQANQRIIDAVATRLEVPQERVISNLANYGNTSAASIPLALDEAVRGGKVKAGHLIATAGFGAGLTWGSAIVRWG</sequence>
<proteinExistence type="evidence at transcript level"/>
<keyword id="KW-0150">Chloroplast</keyword>
<keyword id="KW-0275">Fatty acid biosynthesis</keyword>
<keyword id="KW-0276">Fatty acid metabolism</keyword>
<keyword id="KW-0444">Lipid biosynthesis</keyword>
<keyword id="KW-0443">Lipid metabolism</keyword>
<keyword id="KW-0934">Plastid</keyword>
<keyword id="KW-0808">Transferase</keyword>
<keyword id="KW-0809">Transit peptide</keyword>
<evidence type="ECO:0000250" key="1"/>
<evidence type="ECO:0000255" key="2"/>
<evidence type="ECO:0000305" key="3"/>
<name>FABH2_CUPWR</name>
<accession>P49245</accession>
<feature type="transit peptide" description="Chloroplast" evidence="2">
    <location>
        <begin position="1"/>
        <end status="unknown"/>
    </location>
</feature>
<feature type="chain" id="PRO_0000008734" description="Beta-ketoacyl-[acyl-carrier-protein] synthase III B, chloroplastic">
    <location>
        <begin status="unknown"/>
        <end position="402"/>
    </location>
</feature>
<feature type="active site" evidence="1">
    <location>
        <position position="178"/>
    </location>
</feature>
<feature type="active site" evidence="1">
    <location>
        <position position="328"/>
    </location>
</feature>
<feature type="active site" evidence="1">
    <location>
        <position position="358"/>
    </location>
</feature>
<reference key="1">
    <citation type="journal article" date="1995" name="Plant Physiol.">
        <title>cDNA clones encoding beta-ketoacyl-acyl carrier protein synthase III from Cuphea wrightii.</title>
        <authorList>
            <person name="Slabaugh M.B."/>
            <person name="Tai H."/>
            <person name="Jaworski J."/>
            <person name="Knapp S.J."/>
        </authorList>
    </citation>
    <scope>NUCLEOTIDE SEQUENCE [MRNA]</scope>
    <source>
        <tissue>Embryo</tissue>
    </source>
</reference>
<protein>
    <recommendedName>
        <fullName>Beta-ketoacyl-[acyl-carrier-protein] synthase III B, chloroplastic</fullName>
        <shortName>Beta-ketoacyl-ACP synthase III B</shortName>
        <shortName>KAS III B</shortName>
        <ecNumber>2.3.1.180</ecNumber>
    </recommendedName>
    <alternativeName>
        <fullName>3-oxoacyl-[acyl-carrier-protein] synthase 3 B</fullName>
    </alternativeName>
    <alternativeName>
        <fullName>3-oxoacyl-[acyl-carrier-protein] synthase III B</fullName>
    </alternativeName>
</protein>
<gene>
    <name type="primary">KAS3B</name>
</gene>
<dbReference type="EC" id="2.3.1.180"/>
<dbReference type="EMBL" id="U15934">
    <property type="protein sequence ID" value="AAA97534.1"/>
    <property type="molecule type" value="mRNA"/>
</dbReference>
<dbReference type="SMR" id="P49245"/>
<dbReference type="BRENDA" id="2.3.1.180">
    <property type="organism ID" value="1755"/>
</dbReference>
<dbReference type="UniPathway" id="UPA00094"/>
<dbReference type="GO" id="GO:0009507">
    <property type="term" value="C:chloroplast"/>
    <property type="evidence" value="ECO:0007669"/>
    <property type="project" value="UniProtKB-SubCell"/>
</dbReference>
<dbReference type="GO" id="GO:0004315">
    <property type="term" value="F:3-oxoacyl-[acyl-carrier-protein] synthase activity"/>
    <property type="evidence" value="ECO:0007669"/>
    <property type="project" value="InterPro"/>
</dbReference>
<dbReference type="GO" id="GO:0033818">
    <property type="term" value="F:beta-ketoacyl-acyl-carrier-protein synthase III activity"/>
    <property type="evidence" value="ECO:0007669"/>
    <property type="project" value="UniProtKB-EC"/>
</dbReference>
<dbReference type="GO" id="GO:0006633">
    <property type="term" value="P:fatty acid biosynthetic process"/>
    <property type="evidence" value="ECO:0007669"/>
    <property type="project" value="UniProtKB-UniPathway"/>
</dbReference>
<dbReference type="CDD" id="cd00830">
    <property type="entry name" value="KAS_III"/>
    <property type="match status" value="1"/>
</dbReference>
<dbReference type="FunFam" id="3.40.47.10:FF:000004">
    <property type="entry name" value="3-oxoacyl-[acyl-carrier-protein] synthase 3"/>
    <property type="match status" value="1"/>
</dbReference>
<dbReference type="Gene3D" id="3.40.47.10">
    <property type="match status" value="1"/>
</dbReference>
<dbReference type="HAMAP" id="MF_01815">
    <property type="entry name" value="FabH"/>
    <property type="match status" value="1"/>
</dbReference>
<dbReference type="InterPro" id="IPR013747">
    <property type="entry name" value="ACP_syn_III_C"/>
</dbReference>
<dbReference type="InterPro" id="IPR013751">
    <property type="entry name" value="ACP_syn_III_N"/>
</dbReference>
<dbReference type="InterPro" id="IPR004655">
    <property type="entry name" value="FabH"/>
</dbReference>
<dbReference type="InterPro" id="IPR016039">
    <property type="entry name" value="Thiolase-like"/>
</dbReference>
<dbReference type="NCBIfam" id="TIGR00747">
    <property type="entry name" value="fabH"/>
    <property type="match status" value="1"/>
</dbReference>
<dbReference type="NCBIfam" id="NF006829">
    <property type="entry name" value="PRK09352.1"/>
    <property type="match status" value="1"/>
</dbReference>
<dbReference type="PANTHER" id="PTHR43091">
    <property type="entry name" value="3-OXOACYL-[ACYL-CARRIER-PROTEIN] SYNTHASE"/>
    <property type="match status" value="1"/>
</dbReference>
<dbReference type="PANTHER" id="PTHR43091:SF1">
    <property type="entry name" value="BETA-KETOACYL-[ACYL-CARRIER-PROTEIN] SYNTHASE III, CHLOROPLASTIC"/>
    <property type="match status" value="1"/>
</dbReference>
<dbReference type="Pfam" id="PF08545">
    <property type="entry name" value="ACP_syn_III"/>
    <property type="match status" value="1"/>
</dbReference>
<dbReference type="Pfam" id="PF08541">
    <property type="entry name" value="ACP_syn_III_C"/>
    <property type="match status" value="1"/>
</dbReference>
<dbReference type="SUPFAM" id="SSF53901">
    <property type="entry name" value="Thiolase-like"/>
    <property type="match status" value="1"/>
</dbReference>
<organism>
    <name type="scientific">Cuphea wrightii</name>
    <name type="common">Wright's waxweed</name>
    <dbReference type="NCBI Taxonomy" id="35942"/>
    <lineage>
        <taxon>Eukaryota</taxon>
        <taxon>Viridiplantae</taxon>
        <taxon>Streptophyta</taxon>
        <taxon>Embryophyta</taxon>
        <taxon>Tracheophyta</taxon>
        <taxon>Spermatophyta</taxon>
        <taxon>Magnoliopsida</taxon>
        <taxon>eudicotyledons</taxon>
        <taxon>Gunneridae</taxon>
        <taxon>Pentapetalae</taxon>
        <taxon>rosids</taxon>
        <taxon>malvids</taxon>
        <taxon>Myrtales</taxon>
        <taxon>Lythraceae</taxon>
        <taxon>Cuphea</taxon>
    </lineage>
</organism>
<comment type="function">
    <text evidence="1">Catalyzes the condensation reaction of fatty acid synthesis by the addition to an acyl acceptor of two carbons from malonyl-ACP. KAS III catalyzes the first condensation reaction which initiates fatty acid synthesis and may therefore play a role in governing the total rate of fatty acid production. Possesses both acetoacetyl-ACP synthase and acetyl transacylase activities (By similarity).</text>
</comment>
<comment type="catalytic activity">
    <reaction>
        <text>malonyl-[ACP] + acetyl-CoA + H(+) = 3-oxobutanoyl-[ACP] + CO2 + CoA</text>
        <dbReference type="Rhea" id="RHEA:12080"/>
        <dbReference type="Rhea" id="RHEA-COMP:9623"/>
        <dbReference type="Rhea" id="RHEA-COMP:9625"/>
        <dbReference type="ChEBI" id="CHEBI:15378"/>
        <dbReference type="ChEBI" id="CHEBI:16526"/>
        <dbReference type="ChEBI" id="CHEBI:57287"/>
        <dbReference type="ChEBI" id="CHEBI:57288"/>
        <dbReference type="ChEBI" id="CHEBI:78449"/>
        <dbReference type="ChEBI" id="CHEBI:78450"/>
        <dbReference type="EC" id="2.3.1.180"/>
    </reaction>
</comment>
<comment type="pathway">
    <text>Lipid metabolism; fatty acid biosynthesis.</text>
</comment>
<comment type="subcellular location">
    <subcellularLocation>
        <location>Plastid</location>
        <location>Chloroplast</location>
    </subcellularLocation>
</comment>
<comment type="similarity">
    <text evidence="3">Belongs to the thiolase-like superfamily. FabH family.</text>
</comment>